<reference key="1">
    <citation type="journal article" date="2004" name="Biochem. J.">
        <title>Venom phospholipases A2 of bamboo viper (Trimeresurus stejnegeri): molecular characterization, geographic variations and evidence of multiple ancestries.</title>
        <authorList>
            <person name="Tsai I.-H."/>
            <person name="Wang Y.-M."/>
            <person name="Chen Y.-H."/>
            <person name="Tsai T.-S."/>
            <person name="Tu M.-C."/>
        </authorList>
    </citation>
    <scope>PROTEIN SEQUENCE</scope>
    <scope>FUNCTION</scope>
    <scope>MASS SPECTROMETRY</scope>
    <source>
        <strain>Chinese</strain>
        <tissue>Venom</tissue>
    </source>
</reference>
<organism>
    <name type="scientific">Trimeresurus stejnegeri</name>
    <name type="common">Chinese green tree viper</name>
    <name type="synonym">Viridovipera stejnegeri</name>
    <dbReference type="NCBI Taxonomy" id="39682"/>
    <lineage>
        <taxon>Eukaryota</taxon>
        <taxon>Metazoa</taxon>
        <taxon>Chordata</taxon>
        <taxon>Craniata</taxon>
        <taxon>Vertebrata</taxon>
        <taxon>Euteleostomi</taxon>
        <taxon>Lepidosauria</taxon>
        <taxon>Squamata</taxon>
        <taxon>Bifurcata</taxon>
        <taxon>Unidentata</taxon>
        <taxon>Episquamata</taxon>
        <taxon>Toxicofera</taxon>
        <taxon>Serpentes</taxon>
        <taxon>Colubroidea</taxon>
        <taxon>Viperidae</taxon>
        <taxon>Crotalinae</taxon>
        <taxon>Trimeresurus</taxon>
    </lineage>
</organism>
<dbReference type="EC" id="3.1.1.4"/>
<dbReference type="GO" id="GO:0005576">
    <property type="term" value="C:extracellular region"/>
    <property type="evidence" value="ECO:0007669"/>
    <property type="project" value="UniProtKB-SubCell"/>
</dbReference>
<dbReference type="GO" id="GO:0046872">
    <property type="term" value="F:metal ion binding"/>
    <property type="evidence" value="ECO:0007669"/>
    <property type="project" value="UniProtKB-KW"/>
</dbReference>
<dbReference type="GO" id="GO:0004623">
    <property type="term" value="F:phospholipase A2 activity"/>
    <property type="evidence" value="ECO:0007669"/>
    <property type="project" value="UniProtKB-EC"/>
</dbReference>
<dbReference type="GO" id="GO:0090729">
    <property type="term" value="F:toxin activity"/>
    <property type="evidence" value="ECO:0007669"/>
    <property type="project" value="UniProtKB-KW"/>
</dbReference>
<dbReference type="GO" id="GO:0016042">
    <property type="term" value="P:lipid catabolic process"/>
    <property type="evidence" value="ECO:0007669"/>
    <property type="project" value="UniProtKB-KW"/>
</dbReference>
<accession>P0DJP8</accession>
<name>PA2AG_TRIST</name>
<keyword id="KW-0106">Calcium</keyword>
<keyword id="KW-0903">Direct protein sequencing</keyword>
<keyword id="KW-1015">Disulfide bond</keyword>
<keyword id="KW-1199">Hemostasis impairing toxin</keyword>
<keyword id="KW-0378">Hydrolase</keyword>
<keyword id="KW-0442">Lipid degradation</keyword>
<keyword id="KW-0443">Lipid metabolism</keyword>
<keyword id="KW-0479">Metal-binding</keyword>
<keyword id="KW-1201">Platelet aggregation inhibiting toxin</keyword>
<keyword id="KW-0964">Secreted</keyword>
<keyword id="KW-0800">Toxin</keyword>
<protein>
    <recommendedName>
        <fullName>Acidic phospholipase A2 CTs-A1</fullName>
        <shortName>svPLA2</shortName>
        <ecNumber>3.1.1.4</ecNumber>
    </recommendedName>
    <alternativeName>
        <fullName>Phosphatidylcholine 2-acylhydrolase</fullName>
    </alternativeName>
</protein>
<evidence type="ECO:0000250" key="1"/>
<evidence type="ECO:0000255" key="2">
    <source>
        <dbReference type="PROSITE-ProRule" id="PRU10035"/>
    </source>
</evidence>
<evidence type="ECO:0000255" key="3">
    <source>
        <dbReference type="PROSITE-ProRule" id="PRU10036"/>
    </source>
</evidence>
<evidence type="ECO:0000269" key="4">
    <source>
    </source>
</evidence>
<evidence type="ECO:0000305" key="5"/>
<comment type="function">
    <text evidence="4">Snake venom phospholipase A2 (PLA2) that shows a moderate inhibition of ADP-induced human platelet aggregation when tested on platelet rich plasma. Exhibits moderate hydrolytic activities and prefers the anionic micelles (dPPC with deoxycholate) to the zwitterionic micelles (dPPC with Triton X-100). PLA2 catalyzes the calcium-dependent hydrolysis of the 2-acyl groups in 3-sn-phosphoglycerides.</text>
</comment>
<comment type="catalytic activity">
    <reaction evidence="2 3">
        <text>a 1,2-diacyl-sn-glycero-3-phosphocholine + H2O = a 1-acyl-sn-glycero-3-phosphocholine + a fatty acid + H(+)</text>
        <dbReference type="Rhea" id="RHEA:15801"/>
        <dbReference type="ChEBI" id="CHEBI:15377"/>
        <dbReference type="ChEBI" id="CHEBI:15378"/>
        <dbReference type="ChEBI" id="CHEBI:28868"/>
        <dbReference type="ChEBI" id="CHEBI:57643"/>
        <dbReference type="ChEBI" id="CHEBI:58168"/>
        <dbReference type="EC" id="3.1.1.4"/>
    </reaction>
</comment>
<comment type="cofactor">
    <cofactor evidence="1">
        <name>Ca(2+)</name>
        <dbReference type="ChEBI" id="CHEBI:29108"/>
    </cofactor>
    <text evidence="1">Binds 1 Ca(2+) ion.</text>
</comment>
<comment type="subcellular location">
    <subcellularLocation>
        <location>Secreted</location>
    </subcellularLocation>
</comment>
<comment type="tissue specificity">
    <text>Expressed by the venom gland.</text>
</comment>
<comment type="PTM">
    <text evidence="1">Contains 7 disulfide bonds.</text>
</comment>
<comment type="mass spectrometry"/>
<comment type="similarity">
    <text evidence="5">Belongs to the phospholipase A2 family. Group II subfamily.</text>
</comment>
<sequence>SLIQFETLIMKVAGQSGMFSYSA</sequence>
<proteinExistence type="evidence at protein level"/>
<feature type="chain" id="PRO_0000419071" description="Acidic phospholipase A2 CTs-A1">
    <location>
        <begin position="1"/>
        <end position="23" status="greater than"/>
    </location>
</feature>
<feature type="non-terminal residue">
    <location>
        <position position="23"/>
    </location>
</feature>